<evidence type="ECO:0000250" key="1">
    <source>
        <dbReference type="UniProtKB" id="A0A0M3KKW3"/>
    </source>
</evidence>
<evidence type="ECO:0000250" key="2">
    <source>
        <dbReference type="UniProtKB" id="A2VBC4"/>
    </source>
</evidence>
<evidence type="ECO:0000250" key="3">
    <source>
        <dbReference type="UniProtKB" id="P0DMB7"/>
    </source>
</evidence>
<evidence type="ECO:0000255" key="4"/>
<evidence type="ECO:0000255" key="5">
    <source>
        <dbReference type="PROSITE-ProRule" id="PRU10037"/>
    </source>
</evidence>
<evidence type="ECO:0000269" key="6">
    <source>
    </source>
</evidence>
<evidence type="ECO:0000303" key="7">
    <source>
    </source>
</evidence>
<evidence type="ECO:0000305" key="8"/>
<evidence type="ECO:0000305" key="9">
    <source>
    </source>
</evidence>
<organism>
    <name type="scientific">Vespa affinis</name>
    <name type="common">Lesser banded hornet</name>
    <dbReference type="NCBI Taxonomy" id="882735"/>
    <lineage>
        <taxon>Eukaryota</taxon>
        <taxon>Metazoa</taxon>
        <taxon>Ecdysozoa</taxon>
        <taxon>Arthropoda</taxon>
        <taxon>Hexapoda</taxon>
        <taxon>Insecta</taxon>
        <taxon>Pterygota</taxon>
        <taxon>Neoptera</taxon>
        <taxon>Endopterygota</taxon>
        <taxon>Hymenoptera</taxon>
        <taxon>Apocrita</taxon>
        <taxon>Aculeata</taxon>
        <taxon>Vespoidea</taxon>
        <taxon>Vespidae</taxon>
        <taxon>Vespinae</taxon>
        <taxon>Vespa</taxon>
    </lineage>
</organism>
<dbReference type="EC" id="3.1.1.32" evidence="6"/>
<dbReference type="SMR" id="P0DMB4"/>
<dbReference type="Allergome" id="11764">
    <property type="allergen name" value="Vesp a 1"/>
</dbReference>
<dbReference type="ESTHER" id="vesaf-PA11">
    <property type="family name" value="Insect_Phospholipase"/>
</dbReference>
<dbReference type="GO" id="GO:0005615">
    <property type="term" value="C:extracellular space"/>
    <property type="evidence" value="ECO:0007669"/>
    <property type="project" value="TreeGrafter"/>
</dbReference>
<dbReference type="GO" id="GO:0008970">
    <property type="term" value="F:phospholipase A1 activity"/>
    <property type="evidence" value="ECO:0007669"/>
    <property type="project" value="UniProtKB-EC"/>
</dbReference>
<dbReference type="GO" id="GO:0090729">
    <property type="term" value="F:toxin activity"/>
    <property type="evidence" value="ECO:0007669"/>
    <property type="project" value="UniProtKB-KW"/>
</dbReference>
<dbReference type="GO" id="GO:0031640">
    <property type="term" value="P:killing of cells of another organism"/>
    <property type="evidence" value="ECO:0007669"/>
    <property type="project" value="UniProtKB-KW"/>
</dbReference>
<dbReference type="GO" id="GO:0016042">
    <property type="term" value="P:lipid catabolic process"/>
    <property type="evidence" value="ECO:0007669"/>
    <property type="project" value="UniProtKB-KW"/>
</dbReference>
<dbReference type="Gene3D" id="3.40.50.1820">
    <property type="entry name" value="alpha/beta hydrolase"/>
    <property type="match status" value="1"/>
</dbReference>
<dbReference type="InterPro" id="IPR029058">
    <property type="entry name" value="AB_hydrolase_fold"/>
</dbReference>
<dbReference type="InterPro" id="IPR002334">
    <property type="entry name" value="Allerg_PlipaseA1"/>
</dbReference>
<dbReference type="InterPro" id="IPR013818">
    <property type="entry name" value="Lipase"/>
</dbReference>
<dbReference type="InterPro" id="IPR000734">
    <property type="entry name" value="TAG_lipase"/>
</dbReference>
<dbReference type="PANTHER" id="PTHR11610">
    <property type="entry name" value="LIPASE"/>
    <property type="match status" value="1"/>
</dbReference>
<dbReference type="PANTHER" id="PTHR11610:SF178">
    <property type="entry name" value="LIPASE MEMBER H-A-LIKE PROTEIN"/>
    <property type="match status" value="1"/>
</dbReference>
<dbReference type="Pfam" id="PF00151">
    <property type="entry name" value="Lipase"/>
    <property type="match status" value="1"/>
</dbReference>
<dbReference type="PRINTS" id="PR00825">
    <property type="entry name" value="DOLALLERGEN"/>
</dbReference>
<dbReference type="SUPFAM" id="SSF53474">
    <property type="entry name" value="alpha/beta-Hydrolases"/>
    <property type="match status" value="1"/>
</dbReference>
<dbReference type="PROSITE" id="PS00120">
    <property type="entry name" value="LIPASE_SER"/>
    <property type="match status" value="1"/>
</dbReference>
<proteinExistence type="evidence at protein level"/>
<accession>P0DMB4</accession>
<name>PA11_VESAF</name>
<keyword id="KW-0020">Allergen</keyword>
<keyword id="KW-0204">Cytolysis</keyword>
<keyword id="KW-1015">Disulfide bond</keyword>
<keyword id="KW-0354">Hemolysis</keyword>
<keyword id="KW-0378">Hydrolase</keyword>
<keyword id="KW-0442">Lipid degradation</keyword>
<keyword id="KW-0443">Lipid metabolism</keyword>
<keyword id="KW-0528">Neurotoxin</keyword>
<keyword id="KW-0964">Secreted</keyword>
<keyword id="KW-0732">Signal</keyword>
<keyword id="KW-0800">Toxin</keyword>
<protein>
    <recommendedName>
        <fullName evidence="8">Phospholipase A1 1</fullName>
        <shortName evidence="8">PLA1</shortName>
        <ecNumber evidence="6">3.1.1.32</ecNumber>
    </recommendedName>
    <alternativeName>
        <fullName evidence="7">Allergen Ves a 1.01</fullName>
    </alternativeName>
    <alternativeName>
        <fullName evidence="7">Vespapase</fullName>
    </alternativeName>
    <allergenName evidence="8">Vesp a 1</allergenName>
</protein>
<sequence>MMNLKYLLFFCLVQALHYCYAYGDPSLSNELDRFNPCPYSDDTVKMIILTRENKKHDFYTLNTIKNHNEFKKSTIKHQVVFITHGFTSTATAENFLAMAEALLDKGNYLVILIDWRVAACTNEMAGVKLAYYSYAASNTRLVGNYIATVTKMLVQQYNVPMANIRLIGHSLGAHTSGFAGKKVQELRLGKYSEIIGLDPAGPSFKSQECSQRICETDANYVQIIHTSNHLGTLVTLGTVDFYMNNGYNQPGCGLPIIGETCSHTRAVKYFTECIRHECCLIGVPQSKNPQPVSKCTRNECVCVGLNAKTYPKTGSFYVPVESKAPYCNNKGKII</sequence>
<feature type="signal peptide" evidence="4">
    <location>
        <begin position="1"/>
        <end position="23"/>
    </location>
</feature>
<feature type="propeptide" id="PRO_0000425192" evidence="9">
    <location>
        <begin position="24"/>
        <end position="33"/>
    </location>
</feature>
<feature type="chain" id="PRO_0000425193" description="Phospholipase A1 1" evidence="9">
    <location>
        <begin position="34"/>
        <end position="334"/>
    </location>
</feature>
<feature type="active site" description="Nucleophile" evidence="1">
    <location>
        <position position="170"/>
    </location>
</feature>
<feature type="active site" description="Charge relay system" evidence="5">
    <location>
        <position position="198"/>
    </location>
</feature>
<feature type="active site" description="Charge relay system" evidence="5">
    <location>
        <position position="263"/>
    </location>
</feature>
<feature type="disulfide bond" evidence="1">
    <location>
        <begin position="37"/>
        <end position="120"/>
    </location>
</feature>
<feature type="disulfide bond" evidence="1">
    <location>
        <begin position="209"/>
        <end position="214"/>
    </location>
</feature>
<feature type="disulfide bond" evidence="1">
    <location>
        <begin position="252"/>
        <end position="261"/>
    </location>
</feature>
<feature type="disulfide bond" evidence="1">
    <location>
        <begin position="278"/>
        <end position="302"/>
    </location>
</feature>
<feature type="disulfide bond" evidence="1">
    <location>
        <begin position="279"/>
        <end position="327"/>
    </location>
</feature>
<feature type="disulfide bond" evidence="1">
    <location>
        <begin position="295"/>
        <end position="300"/>
    </location>
</feature>
<reference key="1">
    <citation type="journal article" date="2013" name="Toxicon">
        <title>Purification and structural characterisation of phospholipase A1 (Vespapase, Ves a 1) from Thai banded tiger wasp (Vespa affinis) venom.</title>
        <authorList>
            <person name="Sukprasert S."/>
            <person name="Rungsa P."/>
            <person name="Uawonggul N."/>
            <person name="Incamnoi P."/>
            <person name="Thammasirirak S."/>
            <person name="Daduang J."/>
            <person name="Daduang S."/>
        </authorList>
    </citation>
    <scope>NUCLEOTIDE SEQUENCE [MRNA]</scope>
    <scope>CATALYTIC ACTIVITY</scope>
    <scope>FUNCTION</scope>
    <scope>SUBCELLULAR LOCATION</scope>
    <scope>BIOASSAY</scope>
    <scope>BIOPHYSICOCHEMICAL PROPERTIES</scope>
    <scope>TOXIC DOSE</scope>
    <scope>3D-STRUCTURE MODELING</scope>
    <scope>MASS SPECTROMETRY</scope>
    <source>
        <tissue>Venom</tissue>
        <tissue>Venom gland</tissue>
    </source>
</reference>
<comment type="function">
    <text evidence="3 6">Catalyzes the hydrolysis of phosphatidylcholine with phospholipase A1 activity (3.6 U/ml) (PubMed:23159790). May act as an allergen and induce hemolytic activity (By similarity). In vivo, a mixture of this protein and Ves a 1.02 is able to paralyze crickets (PubMed:23159790).</text>
</comment>
<comment type="catalytic activity">
    <reaction evidence="6">
        <text>a 1,2-diacyl-sn-glycero-3-phosphocholine + H2O = a 2-acyl-sn-glycero-3-phosphocholine + a fatty acid + H(+)</text>
        <dbReference type="Rhea" id="RHEA:18689"/>
        <dbReference type="ChEBI" id="CHEBI:15377"/>
        <dbReference type="ChEBI" id="CHEBI:15378"/>
        <dbReference type="ChEBI" id="CHEBI:28868"/>
        <dbReference type="ChEBI" id="CHEBI:57643"/>
        <dbReference type="ChEBI" id="CHEBI:57875"/>
        <dbReference type="EC" id="3.1.1.32"/>
    </reaction>
</comment>
<comment type="biophysicochemical properties">
    <temperatureDependence>
        <text evidence="6">Loses its activity after heat treatment.</text>
    </temperatureDependence>
</comment>
<comment type="subcellular location">
    <subcellularLocation>
        <location evidence="6">Secreted</location>
    </subcellularLocation>
</comment>
<comment type="tissue specificity">
    <text evidence="9">Expressed by the venom gland.</text>
</comment>
<comment type="PTM">
    <text evidence="6">Not glycosylated.</text>
</comment>
<comment type="mass spectrometry"/>
<comment type="allergen">
    <text evidence="2">Causes an allergic reaction in human. Binds to IgE.</text>
</comment>
<comment type="toxic dose">
    <text evidence="6">60 mg/kg body weight of a mixture of this protein and Ves a 1.02 is able to paralyze 33% of the crickets.</text>
</comment>
<comment type="similarity">
    <text evidence="8">Belongs to the AB hydrolase superfamily. Lipase family.</text>
</comment>